<protein>
    <recommendedName>
        <fullName evidence="15">Diacylglycerol O-acyltransferase 1</fullName>
        <ecNumber evidence="4 9 10">2.3.1.20</ecNumber>
    </recommendedName>
    <alternativeName>
        <fullName>ACAT-related gene product 1</fullName>
    </alternativeName>
    <alternativeName>
        <fullName evidence="12">Acyl-CoA retinol O-fatty-acyltransferase</fullName>
        <shortName evidence="12">ARAT</shortName>
        <shortName evidence="12">Retinol O-fatty-acyltransferase</shortName>
        <ecNumber evidence="4">2.3.1.76</ecNumber>
    </alternativeName>
    <alternativeName>
        <fullName>Diglyceride acyltransferase</fullName>
    </alternativeName>
</protein>
<proteinExistence type="evidence at protein level"/>
<keyword id="KW-0002">3D-structure</keyword>
<keyword id="KW-0012">Acyltransferase</keyword>
<keyword id="KW-0225">Disease variant</keyword>
<keyword id="KW-0256">Endoplasmic reticulum</keyword>
<keyword id="KW-0443">Lipid metabolism</keyword>
<keyword id="KW-0472">Membrane</keyword>
<keyword id="KW-0597">Phosphoprotein</keyword>
<keyword id="KW-1267">Proteomics identification</keyword>
<keyword id="KW-1185">Reference proteome</keyword>
<keyword id="KW-0808">Transferase</keyword>
<keyword id="KW-0812">Transmembrane</keyword>
<keyword id="KW-1133">Transmembrane helix</keyword>
<dbReference type="EC" id="2.3.1.20" evidence="4 9 10"/>
<dbReference type="EC" id="2.3.1.76" evidence="4"/>
<dbReference type="EMBL" id="AF059202">
    <property type="protein sequence ID" value="AAC63997.1"/>
    <property type="molecule type" value="mRNA"/>
</dbReference>
<dbReference type="EMBL" id="AB057815">
    <property type="protein sequence ID" value="BAC66170.1"/>
    <property type="molecule type" value="mRNA"/>
</dbReference>
<dbReference type="EMBL" id="CH471162">
    <property type="protein sequence ID" value="EAW82127.1"/>
    <property type="molecule type" value="Genomic_DNA"/>
</dbReference>
<dbReference type="EMBL" id="CH471162">
    <property type="protein sequence ID" value="EAW82129.1"/>
    <property type="molecule type" value="Genomic_DNA"/>
</dbReference>
<dbReference type="EMBL" id="BC015762">
    <property type="protein sequence ID" value="AAH15762.1"/>
    <property type="molecule type" value="mRNA"/>
</dbReference>
<dbReference type="EMBL" id="BC023565">
    <property type="protein sequence ID" value="AAH23565.1"/>
    <property type="molecule type" value="mRNA"/>
</dbReference>
<dbReference type="EMBL" id="BC150649">
    <property type="protein sequence ID" value="AAI50650.1"/>
    <property type="molecule type" value="mRNA"/>
</dbReference>
<dbReference type="CCDS" id="CCDS6420.1"/>
<dbReference type="RefSeq" id="NP_036211.2">
    <property type="nucleotide sequence ID" value="NM_012079.6"/>
</dbReference>
<dbReference type="PDB" id="6VP0">
    <property type="method" value="EM"/>
    <property type="resolution" value="3.10 A"/>
    <property type="chains" value="C/E=1-488"/>
</dbReference>
<dbReference type="PDB" id="6VYI">
    <property type="method" value="EM"/>
    <property type="resolution" value="3.00 A"/>
    <property type="chains" value="A/B=1-488"/>
</dbReference>
<dbReference type="PDB" id="6VZ1">
    <property type="method" value="EM"/>
    <property type="resolution" value="3.20 A"/>
    <property type="chains" value="A/B=1-488"/>
</dbReference>
<dbReference type="PDB" id="8ESM">
    <property type="method" value="EM"/>
    <property type="resolution" value="3.20 A"/>
    <property type="chains" value="A/B=1-488"/>
</dbReference>
<dbReference type="PDB" id="8ETM">
    <property type="method" value="EM"/>
    <property type="resolution" value="3.20 A"/>
    <property type="chains" value="A/B=1-488"/>
</dbReference>
<dbReference type="PDBsum" id="6VP0"/>
<dbReference type="PDBsum" id="6VYI"/>
<dbReference type="PDBsum" id="6VZ1"/>
<dbReference type="PDBsum" id="8ESM"/>
<dbReference type="PDBsum" id="8ETM"/>
<dbReference type="EMDB" id="EMD-21302"/>
<dbReference type="EMDB" id="EMD-21461"/>
<dbReference type="EMDB" id="EMD-21481"/>
<dbReference type="EMDB" id="EMD-21488"/>
<dbReference type="EMDB" id="EMD-28577"/>
<dbReference type="EMDB" id="EMD-28594"/>
<dbReference type="SMR" id="O75907"/>
<dbReference type="BioGRID" id="114241">
    <property type="interactions" value="45"/>
</dbReference>
<dbReference type="CORUM" id="O75907"/>
<dbReference type="FunCoup" id="O75907">
    <property type="interactions" value="952"/>
</dbReference>
<dbReference type="IntAct" id="O75907">
    <property type="interactions" value="37"/>
</dbReference>
<dbReference type="MINT" id="O75907"/>
<dbReference type="STRING" id="9606.ENSP00000482264"/>
<dbReference type="BindingDB" id="O75907"/>
<dbReference type="ChEMBL" id="CHEMBL6009"/>
<dbReference type="DrugBank" id="DB01094">
    <property type="generic name" value="Hesperetin"/>
</dbReference>
<dbReference type="DrugBank" id="DB14887">
    <property type="generic name" value="PF-04620110"/>
</dbReference>
<dbReference type="DrugBank" id="DB12866">
    <property type="generic name" value="Pradigastat"/>
</dbReference>
<dbReference type="DrugCentral" id="O75907"/>
<dbReference type="GuidetoPHARMACOLOGY" id="2821"/>
<dbReference type="SwissLipids" id="SLP:000000308"/>
<dbReference type="TCDB" id="2.A.50.4.1">
    <property type="family name" value="the glycerol uptake (gup) or membrane-bound acyl transferase (mboat) family"/>
</dbReference>
<dbReference type="iPTMnet" id="O75907"/>
<dbReference type="PhosphoSitePlus" id="O75907"/>
<dbReference type="SwissPalm" id="O75907"/>
<dbReference type="BioMuta" id="DGAT1"/>
<dbReference type="jPOST" id="O75907"/>
<dbReference type="MassIVE" id="O75907"/>
<dbReference type="PaxDb" id="9606-ENSP00000482264"/>
<dbReference type="PeptideAtlas" id="O75907"/>
<dbReference type="ProteomicsDB" id="50257"/>
<dbReference type="Pumba" id="O75907"/>
<dbReference type="Antibodypedia" id="28443">
    <property type="antibodies" value="313 antibodies from 30 providers"/>
</dbReference>
<dbReference type="DNASU" id="8694"/>
<dbReference type="Ensembl" id="ENST00000528718.6">
    <property type="protein sequence ID" value="ENSP00000482264.1"/>
    <property type="gene ID" value="ENSG00000185000.12"/>
</dbReference>
<dbReference type="Ensembl" id="ENST00000644790.2">
    <property type="protein sequence ID" value="ENSP00000495489.1"/>
    <property type="gene ID" value="ENSG00000285482.2"/>
</dbReference>
<dbReference type="GeneID" id="8694"/>
<dbReference type="KEGG" id="hsa:8694"/>
<dbReference type="MANE-Select" id="ENST00000528718.6">
    <property type="protein sequence ID" value="ENSP00000482264.1"/>
    <property type="RefSeq nucleotide sequence ID" value="NM_012079.6"/>
    <property type="RefSeq protein sequence ID" value="NP_036211.2"/>
</dbReference>
<dbReference type="UCSC" id="uc003zbv.5">
    <property type="organism name" value="human"/>
</dbReference>
<dbReference type="AGR" id="HGNC:2843"/>
<dbReference type="CTD" id="8694"/>
<dbReference type="DisGeNET" id="8694"/>
<dbReference type="GeneCards" id="DGAT1"/>
<dbReference type="HGNC" id="HGNC:2843">
    <property type="gene designation" value="DGAT1"/>
</dbReference>
<dbReference type="HPA" id="ENSG00000185000">
    <property type="expression patterns" value="Tissue enhanced (intestine)"/>
</dbReference>
<dbReference type="MalaCards" id="DGAT1"/>
<dbReference type="MIM" id="604900">
    <property type="type" value="gene"/>
</dbReference>
<dbReference type="MIM" id="615863">
    <property type="type" value="phenotype"/>
</dbReference>
<dbReference type="neXtProt" id="NX_O75907"/>
<dbReference type="OpenTargets" id="ENSG00000185000"/>
<dbReference type="Orphanet" id="329242">
    <property type="disease" value="Congenital chronic diarrhea with protein-losing enteropathy"/>
</dbReference>
<dbReference type="PharmGKB" id="PA27303"/>
<dbReference type="VEuPathDB" id="HostDB:ENSG00000185000"/>
<dbReference type="eggNOG" id="KOG0380">
    <property type="taxonomic scope" value="Eukaryota"/>
</dbReference>
<dbReference type="GeneTree" id="ENSGT00950000183081"/>
<dbReference type="HOGENOM" id="CLU_018190_0_0_1"/>
<dbReference type="InParanoid" id="O75907"/>
<dbReference type="OMA" id="RCHDYRR"/>
<dbReference type="OrthoDB" id="10039049at2759"/>
<dbReference type="PAN-GO" id="O75907">
    <property type="GO annotations" value="3 GO annotations based on evolutionary models"/>
</dbReference>
<dbReference type="PhylomeDB" id="O75907"/>
<dbReference type="TreeFam" id="TF314921"/>
<dbReference type="BRENDA" id="2.3.1.20">
    <property type="organism ID" value="2681"/>
</dbReference>
<dbReference type="PathwayCommons" id="O75907"/>
<dbReference type="Reactome" id="R-HSA-1482883">
    <property type="pathway name" value="Acyl chain remodeling of DAG and TAG"/>
</dbReference>
<dbReference type="Reactome" id="R-HSA-6798695">
    <property type="pathway name" value="Neutrophil degranulation"/>
</dbReference>
<dbReference type="Reactome" id="R-HSA-75109">
    <property type="pathway name" value="Triglyceride biosynthesis"/>
</dbReference>
<dbReference type="SABIO-RK" id="O75907"/>
<dbReference type="SignaLink" id="O75907"/>
<dbReference type="SIGNOR" id="O75907"/>
<dbReference type="UniPathway" id="UPA00230"/>
<dbReference type="BioGRID-ORCS" id="8694">
    <property type="hits" value="16 hits in 1154 CRISPR screens"/>
</dbReference>
<dbReference type="ChiTaRS" id="DGAT1">
    <property type="organism name" value="human"/>
</dbReference>
<dbReference type="GenomeRNAi" id="8694"/>
<dbReference type="Pharos" id="O75907">
    <property type="development level" value="Tclin"/>
</dbReference>
<dbReference type="PRO" id="PR:O75907"/>
<dbReference type="Proteomes" id="UP000005640">
    <property type="component" value="Chromosome 8"/>
</dbReference>
<dbReference type="RNAct" id="O75907">
    <property type="molecule type" value="protein"/>
</dbReference>
<dbReference type="Bgee" id="ENSG00000185000">
    <property type="expression patterns" value="Expressed in duodenum and 94 other cell types or tissues"/>
</dbReference>
<dbReference type="ExpressionAtlas" id="O75907">
    <property type="expression patterns" value="baseline and differential"/>
</dbReference>
<dbReference type="GO" id="GO:0005789">
    <property type="term" value="C:endoplasmic reticulum membrane"/>
    <property type="evidence" value="ECO:0000250"/>
    <property type="project" value="UniProt"/>
</dbReference>
<dbReference type="GO" id="GO:0016020">
    <property type="term" value="C:membrane"/>
    <property type="evidence" value="ECO:0000314"/>
    <property type="project" value="UniProtKB"/>
</dbReference>
<dbReference type="GO" id="GO:0005886">
    <property type="term" value="C:plasma membrane"/>
    <property type="evidence" value="ECO:0000304"/>
    <property type="project" value="Reactome"/>
</dbReference>
<dbReference type="GO" id="GO:0035579">
    <property type="term" value="C:specific granule membrane"/>
    <property type="evidence" value="ECO:0000304"/>
    <property type="project" value="Reactome"/>
</dbReference>
<dbReference type="GO" id="GO:0003846">
    <property type="term" value="F:2-acylglycerol O-acyltransferase activity"/>
    <property type="evidence" value="ECO:0007669"/>
    <property type="project" value="Ensembl"/>
</dbReference>
<dbReference type="GO" id="GO:0016746">
    <property type="term" value="F:acyltransferase activity"/>
    <property type="evidence" value="ECO:0000304"/>
    <property type="project" value="ProtInc"/>
</dbReference>
<dbReference type="GO" id="GO:0004144">
    <property type="term" value="F:diacylglycerol O-acyltransferase activity"/>
    <property type="evidence" value="ECO:0000314"/>
    <property type="project" value="UniProtKB"/>
</dbReference>
<dbReference type="GO" id="GO:0042802">
    <property type="term" value="F:identical protein binding"/>
    <property type="evidence" value="ECO:0000353"/>
    <property type="project" value="IntAct"/>
</dbReference>
<dbReference type="GO" id="GO:0050252">
    <property type="term" value="F:retinol O-fatty-acyltransferase activity"/>
    <property type="evidence" value="ECO:0007669"/>
    <property type="project" value="UniProtKB-EC"/>
</dbReference>
<dbReference type="GO" id="GO:0046339">
    <property type="term" value="P:diacylglycerol metabolic process"/>
    <property type="evidence" value="ECO:0000314"/>
    <property type="project" value="UniProtKB"/>
</dbReference>
<dbReference type="GO" id="GO:0055089">
    <property type="term" value="P:fatty acid homeostasis"/>
    <property type="evidence" value="ECO:0007669"/>
    <property type="project" value="Ensembl"/>
</dbReference>
<dbReference type="GO" id="GO:0019915">
    <property type="term" value="P:lipid storage"/>
    <property type="evidence" value="ECO:0000250"/>
    <property type="project" value="BHF-UCL"/>
</dbReference>
<dbReference type="GO" id="GO:0035336">
    <property type="term" value="P:long-chain fatty-acyl-CoA metabolic process"/>
    <property type="evidence" value="ECO:0000250"/>
    <property type="project" value="BHF-UCL"/>
</dbReference>
<dbReference type="GO" id="GO:0006640">
    <property type="term" value="P:monoacylglycerol biosynthetic process"/>
    <property type="evidence" value="ECO:0000314"/>
    <property type="project" value="UniProtKB"/>
</dbReference>
<dbReference type="GO" id="GO:0019432">
    <property type="term" value="P:triglyceride biosynthetic process"/>
    <property type="evidence" value="ECO:0000314"/>
    <property type="project" value="UniProtKB"/>
</dbReference>
<dbReference type="GO" id="GO:0006641">
    <property type="term" value="P:triglyceride metabolic process"/>
    <property type="evidence" value="ECO:0000304"/>
    <property type="project" value="ProtInc"/>
</dbReference>
<dbReference type="GO" id="GO:0034379">
    <property type="term" value="P:very-low-density lipoprotein particle assembly"/>
    <property type="evidence" value="ECO:0000315"/>
    <property type="project" value="BHF-UCL"/>
</dbReference>
<dbReference type="InterPro" id="IPR027251">
    <property type="entry name" value="Diacylglycerol_acylTrfase1"/>
</dbReference>
<dbReference type="InterPro" id="IPR004299">
    <property type="entry name" value="MBOAT_fam"/>
</dbReference>
<dbReference type="InterPro" id="IPR014371">
    <property type="entry name" value="Oat_ACAT_DAG_ARE"/>
</dbReference>
<dbReference type="PANTHER" id="PTHR10408:SF7">
    <property type="entry name" value="DIACYLGLYCEROL O-ACYLTRANSFERASE 1"/>
    <property type="match status" value="1"/>
</dbReference>
<dbReference type="PANTHER" id="PTHR10408">
    <property type="entry name" value="STEROL O-ACYLTRANSFERASE"/>
    <property type="match status" value="1"/>
</dbReference>
<dbReference type="Pfam" id="PF03062">
    <property type="entry name" value="MBOAT"/>
    <property type="match status" value="1"/>
</dbReference>
<dbReference type="PIRSF" id="PIRSF000439">
    <property type="entry name" value="Oat_ACAT_DAG_ARE"/>
    <property type="match status" value="1"/>
</dbReference>
<dbReference type="PIRSF" id="PIRSF500231">
    <property type="entry name" value="Oat_dag"/>
    <property type="match status" value="1"/>
</dbReference>
<sequence length="488" mass="55278">MGDRGSSRRRRTGSRPSSHGGGGPAAAEEEVRDAAAGPDVGAAGDAPAPAPNKDGDAGVGSGHWELRCHRLQDSLFSSDSGFSNYRGILNWCVVMLILSNARLFLENLIKYGILVDPIQVVSLFLKDPYSWPAPCLVIAANVFAVAAFQVEKRLAVGALTEQAGLLLHVANLATILCFPAAVVLLVESITPVGSLLALMAHTILFLKLFSYRDVNSWCRRARAKAASAGKKASSAAAPHTVSYPDNLTYRDLYYFLFAPTLCYELNFPRSPRIRKRFLLRRILEMLFFTQLQVGLIQQWMVPTIQNSMKPFKDMDYSRIIERLLKLAVPNHLIWLIFFYWLFHSCLNAVAELMQFGDREFYRDWWNSESVTYFWQNWNIPVHKWCIRHFYKPMLRRGSSKWMARTGVFLASAFFHEYLVSVPLRMFRLWAFTGMMAQIPLAWFVGRFFQGNYGNAAVWLSLIIGQPIAVLMYVHDYYVLNYEAPAAEA</sequence>
<comment type="function">
    <text evidence="1 2 4 5 7 9 10 11">Catalyzes the terminal and only committed step in triacylglycerol synthesis by using diacylglycerol and fatty acyl CoA as substrates (PubMed:16214399, PubMed:18768481, PubMed:28420705, PubMed:32433610, PubMed:32433611, PubMed:9756920). Highly expressed in epithelial cells of the small intestine and its activity is essential for the absorption of dietary fats (PubMed:18768481). In liver, plays a role in esterifying exogenous fatty acids to glycerol, and is required to synthesize fat for storage (PubMed:16214399). Also present in female mammary glands, where it produces fat in the milk (By similarity). May be involved in VLDL (very low density lipoprotein) assembly (PubMed:18768481). In contrast to DGAT2 it is not essential for survival (By similarity). Functions as the major acyl-CoA retinol acyltransferase (ARAT) in the skin, where it acts to maintain retinoid homeostasis and prevent retinoid toxicity leading to skin and hair disorders (PubMed:16214399). Exhibits additional acyltransferase activities, includin acyl CoA:monoacylglycerol acyltransferase (MGAT), wax monoester and wax diester synthases (By similarity). Also able to use 1-monoalkylglycerol (1-MAkG) as an acyl acceptor for the synthesis of monoalkyl-monoacylglycerol (MAMAG) (PubMed:28420705).</text>
</comment>
<comment type="catalytic activity">
    <reaction evidence="4 9 10">
        <text>an acyl-CoA + a 1,2-diacyl-sn-glycerol = a triacyl-sn-glycerol + CoA</text>
        <dbReference type="Rhea" id="RHEA:10868"/>
        <dbReference type="ChEBI" id="CHEBI:17815"/>
        <dbReference type="ChEBI" id="CHEBI:57287"/>
        <dbReference type="ChEBI" id="CHEBI:58342"/>
        <dbReference type="ChEBI" id="CHEBI:64615"/>
        <dbReference type="EC" id="2.3.1.20"/>
    </reaction>
    <physiologicalReaction direction="left-to-right" evidence="9 10">
        <dbReference type="Rhea" id="RHEA:10869"/>
    </physiologicalReaction>
</comment>
<comment type="catalytic activity">
    <reaction evidence="4">
        <text>all-trans-retinol + an acyl-CoA = an all-trans-retinyl ester + CoA</text>
        <dbReference type="Rhea" id="RHEA:11488"/>
        <dbReference type="ChEBI" id="CHEBI:17336"/>
        <dbReference type="ChEBI" id="CHEBI:57287"/>
        <dbReference type="ChEBI" id="CHEBI:58342"/>
        <dbReference type="ChEBI" id="CHEBI:63410"/>
        <dbReference type="EC" id="2.3.1.76"/>
    </reaction>
    <physiologicalReaction direction="left-to-right" evidence="15">
        <dbReference type="Rhea" id="RHEA:11489"/>
    </physiologicalReaction>
</comment>
<comment type="catalytic activity">
    <reaction evidence="5">
        <text>2-(9Z-octadecenoyl)-glycerol + (9Z)-octadecenoyl-CoA = 1,2-di-(9Z-octadecenoyl)-sn-glycerol + CoA</text>
        <dbReference type="Rhea" id="RHEA:37911"/>
        <dbReference type="ChEBI" id="CHEBI:52333"/>
        <dbReference type="ChEBI" id="CHEBI:57287"/>
        <dbReference type="ChEBI" id="CHEBI:57387"/>
        <dbReference type="ChEBI" id="CHEBI:73990"/>
    </reaction>
    <physiologicalReaction direction="left-to-right" evidence="17">
        <dbReference type="Rhea" id="RHEA:37912"/>
    </physiologicalReaction>
</comment>
<comment type="catalytic activity">
    <reaction evidence="5 9">
        <text>1,2-di-(9Z-octadecenoyl)-sn-glycerol + (9Z)-octadecenoyl-CoA = 1,2,3-tri-(9Z-octadecenoyl)-glycerol + CoA</text>
        <dbReference type="Rhea" id="RHEA:38219"/>
        <dbReference type="ChEBI" id="CHEBI:52333"/>
        <dbReference type="ChEBI" id="CHEBI:53753"/>
        <dbReference type="ChEBI" id="CHEBI:57287"/>
        <dbReference type="ChEBI" id="CHEBI:57387"/>
    </reaction>
    <physiologicalReaction direction="left-to-right" evidence="9 17">
        <dbReference type="Rhea" id="RHEA:38220"/>
    </physiologicalReaction>
</comment>
<comment type="catalytic activity">
    <reaction evidence="4">
        <text>all-trans-retinol + hexadecanoyl-CoA = all-trans-retinyl hexadecanoate + CoA</text>
        <dbReference type="Rhea" id="RHEA:38175"/>
        <dbReference type="ChEBI" id="CHEBI:17336"/>
        <dbReference type="ChEBI" id="CHEBI:17616"/>
        <dbReference type="ChEBI" id="CHEBI:57287"/>
        <dbReference type="ChEBI" id="CHEBI:57379"/>
    </reaction>
    <physiologicalReaction direction="left-to-right" evidence="16">
        <dbReference type="Rhea" id="RHEA:38176"/>
    </physiologicalReaction>
</comment>
<comment type="catalytic activity">
    <reaction evidence="7">
        <text>1-O-(9Z-octadecenyl)-glycerol + (9Z)-octadecenoyl-CoA = 1-O-(9Z-octadecyl)-3-(9Z-octadecenoyl)-glycerol + CoA</text>
        <dbReference type="Rhea" id="RHEA:55340"/>
        <dbReference type="ChEBI" id="CHEBI:34116"/>
        <dbReference type="ChEBI" id="CHEBI:57287"/>
        <dbReference type="ChEBI" id="CHEBI:57387"/>
        <dbReference type="ChEBI" id="CHEBI:197429"/>
    </reaction>
    <physiologicalReaction direction="left-to-right" evidence="18">
        <dbReference type="Rhea" id="RHEA:55341"/>
    </physiologicalReaction>
</comment>
<comment type="catalytic activity">
    <reaction evidence="7">
        <text>1-O-(9Z-octadecyl)-3-(9Z-octadecenoyl)-glycerol + (9Z)-octadecenoyl-CoA = 1-O-(9Z-octadecenyl)-2,3-di-(9Z-octadecenoyl)glycerol + CoA</text>
        <dbReference type="Rhea" id="RHEA:55344"/>
        <dbReference type="ChEBI" id="CHEBI:57287"/>
        <dbReference type="ChEBI" id="CHEBI:57387"/>
        <dbReference type="ChEBI" id="CHEBI:138735"/>
        <dbReference type="ChEBI" id="CHEBI:197429"/>
    </reaction>
    <physiologicalReaction direction="left-to-right" evidence="18">
        <dbReference type="Rhea" id="RHEA:55345"/>
    </physiologicalReaction>
</comment>
<comment type="catalytic activity">
    <reaction evidence="7">
        <text>1-(9Z-octadecenoyl)-glycerol + (9Z)-octadecenoyl-CoA = 1,2-di-(9Z-octadecenoyl)-glycerol + CoA</text>
        <dbReference type="Rhea" id="RHEA:37915"/>
        <dbReference type="ChEBI" id="CHEBI:52323"/>
        <dbReference type="ChEBI" id="CHEBI:57287"/>
        <dbReference type="ChEBI" id="CHEBI:57387"/>
        <dbReference type="ChEBI" id="CHEBI:75342"/>
    </reaction>
    <physiologicalReaction direction="left-to-right" evidence="18">
        <dbReference type="Rhea" id="RHEA:37916"/>
    </physiologicalReaction>
</comment>
<comment type="catalytic activity">
    <reaction evidence="7">
        <text>1,2-di-(9Z-octadecenoyl)-glycerol + (9Z)-octadecenoate + H(+) = 1,2,3-tri-(9Z-octadecenoyl)-glycerol + H2O</text>
        <dbReference type="Rhea" id="RHEA:38379"/>
        <dbReference type="ChEBI" id="CHEBI:15377"/>
        <dbReference type="ChEBI" id="CHEBI:15378"/>
        <dbReference type="ChEBI" id="CHEBI:30823"/>
        <dbReference type="ChEBI" id="CHEBI:52323"/>
        <dbReference type="ChEBI" id="CHEBI:53753"/>
    </reaction>
    <physiologicalReaction direction="left-to-right" evidence="18">
        <dbReference type="Rhea" id="RHEA:38380"/>
    </physiologicalReaction>
</comment>
<comment type="catalytic activity">
    <reaction evidence="2">
        <text>1-octadecanoyl-2-(5Z,8Z,11Z,14Z-eicosatetraenoyl)-sn-glycerol + (9Z)-octadecenoyl-CoA = 1-octadecanoyl-2-(5Z,8Z,11Z,14Z)-eicosatetraenoyl-3-(9Z)-octadecenoyl-sn-glycerol + CoA</text>
        <dbReference type="Rhea" id="RHEA:38307"/>
        <dbReference type="ChEBI" id="CHEBI:57287"/>
        <dbReference type="ChEBI" id="CHEBI:57387"/>
        <dbReference type="ChEBI" id="CHEBI:75728"/>
        <dbReference type="ChEBI" id="CHEBI:75729"/>
    </reaction>
    <physiologicalReaction direction="left-to-right" evidence="2">
        <dbReference type="Rhea" id="RHEA:38308"/>
    </physiologicalReaction>
</comment>
<comment type="catalytic activity">
    <reaction evidence="2">
        <text>hexadecane-1,2-diol + 2 hexadecanoyl-CoA = 1,2-O,O-dihexadecanoyl-1,2-hexadecanediol + 2 CoA</text>
        <dbReference type="Rhea" id="RHEA:38211"/>
        <dbReference type="ChEBI" id="CHEBI:57287"/>
        <dbReference type="ChEBI" id="CHEBI:57379"/>
        <dbReference type="ChEBI" id="CHEBI:75586"/>
        <dbReference type="ChEBI" id="CHEBI:75608"/>
    </reaction>
    <physiologicalReaction direction="left-to-right" evidence="2">
        <dbReference type="Rhea" id="RHEA:38212"/>
    </physiologicalReaction>
</comment>
<comment type="catalytic activity">
    <reaction evidence="2">
        <text>hexadecane-1,2-diol + hexadecanoyl-CoA = 2-hydroxyhexadecyl hexadecanoate + CoA</text>
        <dbReference type="Rhea" id="RHEA:38171"/>
        <dbReference type="ChEBI" id="CHEBI:57287"/>
        <dbReference type="ChEBI" id="CHEBI:57379"/>
        <dbReference type="ChEBI" id="CHEBI:75586"/>
        <dbReference type="ChEBI" id="CHEBI:75587"/>
    </reaction>
    <physiologicalReaction direction="left-to-right" evidence="2">
        <dbReference type="Rhea" id="RHEA:38172"/>
    </physiologicalReaction>
</comment>
<comment type="catalytic activity">
    <reaction evidence="2">
        <text>2-(9Z-octadecenoyl)-glycerol + hexadecanoyl-CoA = 1-hexadecanoyl-2-(9Z-octadecenoyl)-sn-glycerol + CoA</text>
        <dbReference type="Rhea" id="RHEA:38071"/>
        <dbReference type="ChEBI" id="CHEBI:57287"/>
        <dbReference type="ChEBI" id="CHEBI:57379"/>
        <dbReference type="ChEBI" id="CHEBI:73990"/>
        <dbReference type="ChEBI" id="CHEBI:75466"/>
    </reaction>
    <physiologicalReaction direction="left-to-right" evidence="2">
        <dbReference type="Rhea" id="RHEA:38072"/>
    </physiologicalReaction>
</comment>
<comment type="catalytic activity">
    <reaction evidence="2">
        <text>1,2-di-(9Z-octadecenoyl)-sn-glycerol + hexadecanoyl-CoA = 1,2-di-(9Z)-octadecenoyl-3-hexadecanoyl-sn-glycerol + CoA</text>
        <dbReference type="Rhea" id="RHEA:38163"/>
        <dbReference type="ChEBI" id="CHEBI:52333"/>
        <dbReference type="ChEBI" id="CHEBI:57287"/>
        <dbReference type="ChEBI" id="CHEBI:57379"/>
        <dbReference type="ChEBI" id="CHEBI:75583"/>
    </reaction>
    <physiologicalReaction direction="left-to-right" evidence="2">
        <dbReference type="Rhea" id="RHEA:38164"/>
    </physiologicalReaction>
</comment>
<comment type="catalytic activity">
    <reaction evidence="2">
        <text>hexadecan-1-ol + hexadecanoyl-CoA = hexadecanyl hexadecanoate + CoA</text>
        <dbReference type="Rhea" id="RHEA:38167"/>
        <dbReference type="ChEBI" id="CHEBI:16125"/>
        <dbReference type="ChEBI" id="CHEBI:57287"/>
        <dbReference type="ChEBI" id="CHEBI:57379"/>
        <dbReference type="ChEBI" id="CHEBI:75584"/>
    </reaction>
    <physiologicalReaction direction="left-to-right" evidence="2">
        <dbReference type="Rhea" id="RHEA:38168"/>
    </physiologicalReaction>
</comment>
<comment type="catalytic activity">
    <reaction evidence="2">
        <text>13-cis-retinol + hexadecanoyl-CoA = 13-cis-retinyl hexadecanoate + CoA</text>
        <dbReference type="Rhea" id="RHEA:55296"/>
        <dbReference type="ChEBI" id="CHEBI:45479"/>
        <dbReference type="ChEBI" id="CHEBI:57287"/>
        <dbReference type="ChEBI" id="CHEBI:57379"/>
        <dbReference type="ChEBI" id="CHEBI:138722"/>
    </reaction>
    <physiologicalReaction direction="left-to-right" evidence="2">
        <dbReference type="Rhea" id="RHEA:55297"/>
    </physiologicalReaction>
</comment>
<comment type="catalytic activity">
    <reaction evidence="2">
        <text>1,3-di-(9Z-octadecenoyl)-glycerol + (9Z)-octadecenoyl-CoA = 1,2,3-tri-(9Z-octadecenoyl)-glycerol + CoA</text>
        <dbReference type="Rhea" id="RHEA:38435"/>
        <dbReference type="ChEBI" id="CHEBI:53753"/>
        <dbReference type="ChEBI" id="CHEBI:57287"/>
        <dbReference type="ChEBI" id="CHEBI:57387"/>
        <dbReference type="ChEBI" id="CHEBI:75735"/>
    </reaction>
    <physiologicalReaction direction="left-to-right" evidence="2">
        <dbReference type="Rhea" id="RHEA:38436"/>
    </physiologicalReaction>
</comment>
<comment type="catalytic activity">
    <reaction evidence="2">
        <text>2,3-di-(9Z)-octadecenoyl-sn-glycerol + (9Z)-octadecenoyl-CoA = 1,2,3-tri-(9Z-octadecenoyl)-glycerol + CoA</text>
        <dbReference type="Rhea" id="RHEA:38439"/>
        <dbReference type="ChEBI" id="CHEBI:53753"/>
        <dbReference type="ChEBI" id="CHEBI:57287"/>
        <dbReference type="ChEBI" id="CHEBI:57387"/>
        <dbReference type="ChEBI" id="CHEBI:75824"/>
    </reaction>
    <physiologicalReaction direction="left-to-right" evidence="2">
        <dbReference type="Rhea" id="RHEA:38440"/>
    </physiologicalReaction>
</comment>
<comment type="activity regulation">
    <text evidence="4">XP620 is a selective DGAT1 inhibitor.</text>
</comment>
<comment type="biophysicochemical properties">
    <kinetics>
        <KM evidence="4">25.9 uM for retinol</KM>
        <KM evidence="4">13.9 uM for palmitoyl coenzyme A</KM>
        <KM evidence="9">14.6 uM for (9Z)-octadecenoyl-CoA</KM>
        <KM evidence="9">8.6 uM for octadecanoyl-CoA</KM>
        <KM evidence="9">6.4 uM for hexadecanoyl-coA</KM>
        <KM evidence="9">6.2 uM for (9Z)-hexadecenoyl-CoA</KM>
        <KM evidence="9">597.1 uM for 1,2-di-(9Z-octadecenoyl)-sn-glycerol (with DGAT1 as homodimer)</KM>
        <KM evidence="9">497.5 uM for 1,2-di-(9Z-octadecenoyl)-sn-glycerol (with DGAT1 as homotetramer)</KM>
        <Vmax evidence="9">956.6 pmol/min/ug enzyme with (9Z)-octadecenoyl-CoA as substrate</Vmax>
        <Vmax evidence="9">839.4 pmol/min/ug enzyme with octadecanoyl-CoA as substrate</Vmax>
        <Vmax evidence="9">767.8 pmol/min/ug enzyme with hexadecanoyl-coA as substrate</Vmax>
        <Vmax evidence="9">838.6 pmol/min/ug enzyme with (9Z)-hexadecenoyl-CoA as substrate</Vmax>
        <Vmax evidence="9">3310.0 pmol/min/ug enzyme with 1,2-di-(9Z-octadecenoyl)-sn-glycerol (with DGAT1 as homodimer) as substrate</Vmax>
        <Vmax evidence="9">3628.0 pmol/min/ug enzyme with 1,2-di-(9Z-octadecenoyl)-sn-glycerol (with DGAT1 as homotetramer) as substrate</Vmax>
    </kinetics>
</comment>
<comment type="pathway">
    <text>Lipid metabolism; glycerolipid metabolism.</text>
</comment>
<comment type="subunit">
    <text evidence="9 10">Homodimer or homotetramer; both forms have similar enzymatic activities.</text>
</comment>
<comment type="interaction">
    <interactant intactId="EBI-3906527">
        <id>O75907</id>
    </interactant>
    <interactant intactId="EBI-3906527">
        <id>O75907</id>
        <label>DGAT1</label>
    </interactant>
    <organismsDiffer>false</organismsDiffer>
    <experiments>4</experiments>
</comment>
<comment type="interaction">
    <interactant intactId="EBI-3906527">
        <id>O75907</id>
    </interactant>
    <interactant intactId="EBI-6927873">
        <id>PRO_0000045602</id>
        <dbReference type="UniProtKB" id="Q99IB8"/>
    </interactant>
    <organismsDiffer>true</organismsDiffer>
    <experiments>2</experiments>
</comment>
<comment type="subcellular location">
    <subcellularLocation>
        <location evidence="2">Endoplasmic reticulum membrane</location>
        <topology evidence="9 10">Multi-pass membrane protein</topology>
    </subcellularLocation>
</comment>
<comment type="domain">
    <text evidence="19 20">The disordered N-terminal region is required for the diacylglycerol O-acyltransferase activity and may regulate enzymatic function via its interaction with the MBOAT fold.</text>
</comment>
<comment type="domain">
    <text evidence="9 10">The MBOAT fold forms a reaction chamber in the endoplasmic reticulum membrane that encloses the active sites (PubMed:32433610, PubMed:32433611). The reaction chamber has a tunnel to the cytosolic side and its entrance recognizes the hydrophilic CoA motif of an acyl-CoA molecule (PubMed:32433610). The chamber has separate entrances for each of the two substrates, acyl-CoA and 1,2-diacyl-sn-glycerol (PubMed:32433610).</text>
</comment>
<comment type="disease" evidence="6 8">
    <disease id="DI-04130">
        <name>Diarrhea 7, protein-losing enteropathy type</name>
        <acronym>DIAR7</acronym>
        <description>A life-threatening disease characterized by severe, intractable, watery diarrhea.</description>
        <dbReference type="MIM" id="615863"/>
    </disease>
    <text>The disease is caused by variants affecting the gene represented in this entry.</text>
</comment>
<comment type="similarity">
    <text evidence="15">Belongs to the membrane-bound acyltransferase family. Sterol o-acyltransferase subfamily.</text>
</comment>
<evidence type="ECO:0000250" key="1">
    <source>
        <dbReference type="UniProtKB" id="Q8MK44"/>
    </source>
</evidence>
<evidence type="ECO:0000250" key="2">
    <source>
        <dbReference type="UniProtKB" id="Q9Z2A7"/>
    </source>
</evidence>
<evidence type="ECO:0000256" key="3">
    <source>
        <dbReference type="SAM" id="MobiDB-lite"/>
    </source>
</evidence>
<evidence type="ECO:0000269" key="4">
    <source>
    </source>
</evidence>
<evidence type="ECO:0000269" key="5">
    <source>
    </source>
</evidence>
<evidence type="ECO:0000269" key="6">
    <source>
    </source>
</evidence>
<evidence type="ECO:0000269" key="7">
    <source>
    </source>
</evidence>
<evidence type="ECO:0000269" key="8">
    <source>
    </source>
</evidence>
<evidence type="ECO:0000269" key="9">
    <source>
    </source>
</evidence>
<evidence type="ECO:0000269" key="10">
    <source>
    </source>
</evidence>
<evidence type="ECO:0000269" key="11">
    <source>
    </source>
</evidence>
<evidence type="ECO:0000303" key="12">
    <source>
    </source>
</evidence>
<evidence type="ECO:0000303" key="13">
    <source>
    </source>
</evidence>
<evidence type="ECO:0000303" key="14">
    <source>
    </source>
</evidence>
<evidence type="ECO:0000305" key="15"/>
<evidence type="ECO:0000305" key="16">
    <source>
    </source>
</evidence>
<evidence type="ECO:0000305" key="17">
    <source>
    </source>
</evidence>
<evidence type="ECO:0000305" key="18">
    <source>
    </source>
</evidence>
<evidence type="ECO:0000305" key="19">
    <source>
    </source>
</evidence>
<evidence type="ECO:0000305" key="20">
    <source>
    </source>
</evidence>
<evidence type="ECO:0000312" key="21">
    <source>
        <dbReference type="HGNC" id="HGNC:2843"/>
    </source>
</evidence>
<evidence type="ECO:0007744" key="22">
    <source>
        <dbReference type="PDB" id="6VP0"/>
    </source>
</evidence>
<evidence type="ECO:0007744" key="23">
    <source>
        <dbReference type="PDB" id="6VYI"/>
    </source>
</evidence>
<evidence type="ECO:0007744" key="24">
    <source>
        <dbReference type="PDB" id="6VZ1"/>
    </source>
</evidence>
<evidence type="ECO:0007744" key="25">
    <source>
    </source>
</evidence>
<evidence type="ECO:0007829" key="26">
    <source>
        <dbReference type="PDB" id="6VP0"/>
    </source>
</evidence>
<evidence type="ECO:0007829" key="27">
    <source>
        <dbReference type="PDB" id="6VYI"/>
    </source>
</evidence>
<evidence type="ECO:0007829" key="28">
    <source>
        <dbReference type="PDB" id="6VZ1"/>
    </source>
</evidence>
<evidence type="ECO:0007829" key="29">
    <source>
        <dbReference type="PDB" id="8ETM"/>
    </source>
</evidence>
<name>DGAT1_HUMAN</name>
<organism>
    <name type="scientific">Homo sapiens</name>
    <name type="common">Human</name>
    <dbReference type="NCBI Taxonomy" id="9606"/>
    <lineage>
        <taxon>Eukaryota</taxon>
        <taxon>Metazoa</taxon>
        <taxon>Chordata</taxon>
        <taxon>Craniata</taxon>
        <taxon>Vertebrata</taxon>
        <taxon>Euteleostomi</taxon>
        <taxon>Mammalia</taxon>
        <taxon>Eutheria</taxon>
        <taxon>Euarchontoglires</taxon>
        <taxon>Primates</taxon>
        <taxon>Haplorrhini</taxon>
        <taxon>Catarrhini</taxon>
        <taxon>Hominidae</taxon>
        <taxon>Homo</taxon>
    </lineage>
</organism>
<feature type="chain" id="PRO_0000207654" description="Diacylglycerol O-acyltransferase 1">
    <location>
        <begin position="1"/>
        <end position="488"/>
    </location>
</feature>
<feature type="topological domain" description="Cytoplasmic" evidence="9 10">
    <location>
        <begin position="1"/>
        <end position="83"/>
    </location>
</feature>
<feature type="transmembrane region" description="Helical; Name=1" evidence="9 10 22 23 24">
    <location>
        <begin position="84"/>
        <end position="118"/>
    </location>
</feature>
<feature type="topological domain" description="Lumenal" evidence="9 10">
    <location>
        <begin position="119"/>
        <end position="130"/>
    </location>
</feature>
<feature type="transmembrane region" description="Helical; Name=2" evidence="9 10 22 23 24">
    <location>
        <begin position="131"/>
        <end position="156"/>
    </location>
</feature>
<feature type="topological domain" description="Cytoplasmic" evidence="9 10">
    <location>
        <begin position="157"/>
        <end position="161"/>
    </location>
</feature>
<feature type="transmembrane region" description="Helical; Name=3" evidence="9 10 22 23 24">
    <location>
        <begin position="162"/>
        <end position="184"/>
    </location>
</feature>
<feature type="topological domain" description="Lumenal" evidence="9 10">
    <location>
        <begin position="185"/>
        <end position="191"/>
    </location>
</feature>
<feature type="transmembrane region" description="Helical; Name=4" evidence="9 10 22 23 24">
    <location>
        <begin position="192"/>
        <end position="223"/>
    </location>
</feature>
<feature type="topological domain" description="Cytoplasmic" evidence="9 10">
    <location>
        <begin position="224"/>
        <end position="273"/>
    </location>
</feature>
<feature type="transmembrane region" description="Helical; Name=5" evidence="9 10 22 23 24">
    <location>
        <begin position="274"/>
        <end position="308"/>
    </location>
</feature>
<feature type="topological domain" description="Lumenal" evidence="9 10">
    <location>
        <begin position="309"/>
        <end position="315"/>
    </location>
</feature>
<feature type="transmembrane region" description="Helical; Name=6" evidence="9 10 22 23 24">
    <location>
        <begin position="316"/>
        <end position="353"/>
    </location>
</feature>
<feature type="topological domain" description="Cytoplasmic" evidence="9 10">
    <location>
        <begin position="354"/>
        <end position="399"/>
    </location>
</feature>
<feature type="transmembrane region" description="Helical; Name=7" evidence="9 10 22 23 24">
    <location>
        <begin position="400"/>
        <end position="420"/>
    </location>
</feature>
<feature type="topological domain" description="Lumenal" evidence="9 10">
    <location>
        <begin position="421"/>
        <end position="428"/>
    </location>
</feature>
<feature type="transmembrane region" description="Helical; Name=8" evidence="9 10 22 23 24">
    <location>
        <begin position="429"/>
        <end position="447"/>
    </location>
</feature>
<feature type="topological domain" description="Cytoplasmic" evidence="9 10">
    <location>
        <begin position="448"/>
        <end position="449"/>
    </location>
</feature>
<feature type="transmembrane region" description="Helical; Name=9" evidence="9 10 22 23 24">
    <location>
        <begin position="450"/>
        <end position="481"/>
    </location>
</feature>
<feature type="topological domain" description="Lumenal" evidence="9 10">
    <location>
        <begin position="482"/>
        <end position="488"/>
    </location>
</feature>
<feature type="region of interest" description="Involved in homomerization" evidence="2">
    <location>
        <begin position="1"/>
        <end position="91"/>
    </location>
</feature>
<feature type="region of interest" description="Disordered" evidence="19">
    <location>
        <begin position="1"/>
        <end position="57"/>
    </location>
</feature>
<feature type="region of interest" description="Extracellular loop 1 (EL1)" evidence="9">
    <location>
        <begin position="119"/>
        <end position="130"/>
    </location>
</feature>
<feature type="region of interest" description="MBOAT fold" evidence="9">
    <location>
        <begin position="131"/>
        <end position="488"/>
    </location>
</feature>
<feature type="region of interest" description="Intracellular loop 1 (IL1)" evidence="9">
    <location>
        <begin position="224"/>
        <end position="276"/>
    </location>
</feature>
<feature type="region of interest" description="Intracellular loop 2 (IL2)" evidence="9">
    <location>
        <begin position="354"/>
        <end position="399"/>
    </location>
</feature>
<feature type="region of interest" description="Amphipathic helix (AH)" evidence="9">
    <location>
        <begin position="380"/>
        <end position="394"/>
    </location>
</feature>
<feature type="short sequence motif" description="FYXDWWN motif" evidence="13">
    <location>
        <begin position="360"/>
        <end position="366"/>
    </location>
</feature>
<feature type="compositionally biased region" description="Low complexity" evidence="3">
    <location>
        <begin position="34"/>
        <end position="47"/>
    </location>
</feature>
<feature type="active site" evidence="9">
    <location>
        <position position="415"/>
    </location>
</feature>
<feature type="binding site" evidence="9 10 22 23 24">
    <location>
        <begin position="374"/>
        <end position="382"/>
    </location>
    <ligand>
        <name>an acyl-CoA</name>
        <dbReference type="ChEBI" id="CHEBI:58342"/>
    </ligand>
</feature>
<feature type="binding site" evidence="9 10 22 23 24">
    <location>
        <position position="390"/>
    </location>
    <ligand>
        <name>an acyl-CoA</name>
        <dbReference type="ChEBI" id="CHEBI:58342"/>
    </ligand>
</feature>
<feature type="binding site" evidence="9 22">
    <location>
        <position position="404"/>
    </location>
    <ligand>
        <name>an acyl-CoA</name>
        <dbReference type="ChEBI" id="CHEBI:58342"/>
    </ligand>
</feature>
<feature type="binding site" evidence="10 23 24">
    <location>
        <position position="477"/>
    </location>
    <ligand>
        <name>an acyl-CoA</name>
        <dbReference type="ChEBI" id="CHEBI:58342"/>
    </ligand>
</feature>
<feature type="site" description="Important for catalytic activity" evidence="9">
    <location>
        <position position="416"/>
    </location>
</feature>
<feature type="modified residue" description="Phosphoserine" evidence="25">
    <location>
        <position position="17"/>
    </location>
</feature>
<feature type="modified residue" description="Phosphoserine" evidence="25">
    <location>
        <position position="18"/>
    </location>
</feature>
<feature type="sequence variant" id="VAR_082141" description="In DIAR7; uncertain significance." evidence="8">
    <location>
        <begin position="458"/>
        <end position="488"/>
    </location>
</feature>
<feature type="mutagenesis site" description="Strongly reduced diacylglycerol O-acyltransferase activity." evidence="9">
    <original>L</original>
    <variation>W</variation>
    <location>
        <position position="346"/>
    </location>
</feature>
<feature type="mutagenesis site" description="Decreased diacylglycerol O-acyltransferase activity." evidence="9">
    <original>T</original>
    <variation>A</variation>
    <location>
        <position position="371"/>
    </location>
</feature>
<feature type="mutagenesis site" description="Slightly decreased diacylglycerol O-acyltransferase activity." evidence="10">
    <original>Q</original>
    <variation>A</variation>
    <location>
        <position position="375"/>
    </location>
</feature>
<feature type="mutagenesis site" description="Abolished diacylglycerol O-acyltransferase activity." evidence="9">
    <original>W</original>
    <variation>F</variation>
    <location>
        <position position="377"/>
    </location>
</feature>
<feature type="mutagenesis site" description="Abolished diacylglycerol O-acyltransferase activity." evidence="9 10">
    <original>N</original>
    <variation>A</variation>
    <variation>L</variation>
    <location>
        <position position="378"/>
    </location>
</feature>
<feature type="mutagenesis site" description="Does not affect diacylglycerol O-acyltransferase activity." evidence="10">
    <original>V</original>
    <variation>A</variation>
    <location>
        <position position="381"/>
    </location>
</feature>
<feature type="mutagenesis site" description="Decreased diacylglycerol O-acyltransferase activity." evidence="10">
    <original>V</original>
    <variation>W</variation>
    <location>
        <position position="381"/>
    </location>
</feature>
<feature type="mutagenesis site" description="Decreased diacylglycerol O-acyltransferase activity." evidence="9 10">
    <original>H</original>
    <variation>A</variation>
    <location>
        <position position="382"/>
    </location>
</feature>
<feature type="mutagenesis site" description="Decreased diacylglycerol O-acyltransferase activity." evidence="10">
    <original>C</original>
    <variation>W</variation>
    <location>
        <position position="385"/>
    </location>
</feature>
<feature type="mutagenesis site" description="Slightly decreased diacylglycerol O-acyltransferase activity." evidence="10">
    <original>I</original>
    <variation>A</variation>
    <location>
        <position position="386"/>
    </location>
</feature>
<feature type="mutagenesis site" description="Decreased diacylglycerol O-acyltransferase activity." evidence="9 10">
    <original>Y</original>
    <variation>A</variation>
    <location>
        <position position="390"/>
    </location>
</feature>
<feature type="mutagenesis site" description="Slightly decreased diacylglycerol O-acyltransferase activity." evidence="10">
    <original>K</original>
    <variation>A</variation>
    <location>
        <position position="391"/>
    </location>
</feature>
<feature type="mutagenesis site" description="Decreased diacylglycerol O-acyltransferase activity." evidence="9">
    <original>K</original>
    <variation>L</variation>
    <location>
        <position position="400"/>
    </location>
</feature>
<feature type="mutagenesis site" description="Does not affect diacylglycerol O-acyltransferase activity." evidence="10">
    <original>R</original>
    <variation>A</variation>
    <location>
        <position position="404"/>
    </location>
</feature>
<feature type="mutagenesis site" description="Decreased diacylglycerol O-acyltransferase activity." evidence="9">
    <original>R</original>
    <variation>L</variation>
    <location>
        <position position="404"/>
    </location>
</feature>
<feature type="mutagenesis site" description="Decreased diacylglycerol O-acyltransferase activity." evidence="10">
    <original>V</original>
    <variation>F</variation>
    <location>
        <position position="407"/>
    </location>
</feature>
<feature type="mutagenesis site" description="Abolished diacylglycerol O-acyltransferase activity." evidence="9 10">
    <original>S</original>
    <variation>A</variation>
    <variation>W</variation>
    <location>
        <position position="411"/>
    </location>
</feature>
<feature type="mutagenesis site" description="Decreased diacylglycerol O-acyltransferase activity." evidence="10">
    <original>S</original>
    <variation>I</variation>
    <location>
        <position position="411"/>
    </location>
</feature>
<feature type="mutagenesis site" description="Abolished diacylglycerol O-acyltransferase activity." evidence="9 10">
    <original>H</original>
    <variation>A</variation>
    <location>
        <position position="415"/>
    </location>
</feature>
<feature type="mutagenesis site" description="Abolished diacylglycerol O-acyltransferase activity." evidence="9">
    <original>E</original>
    <variation>A</variation>
    <location>
        <position position="416"/>
    </location>
</feature>
<feature type="mutagenesis site" description="Reduced diacylglycerol O-acyltransferase activity." evidence="10">
    <original>M</original>
    <variation>A</variation>
    <variation>I</variation>
    <location>
        <position position="434"/>
    </location>
</feature>
<feature type="mutagenesis site" description="Reduced diacylglycerol O-acyltransferase activity." evidence="10">
    <original>Q</original>
    <variation>A</variation>
    <location>
        <position position="437"/>
    </location>
</feature>
<feature type="mutagenesis site" description="Reduced diacylglycerol O-acyltransferase activity." evidence="10">
    <original>Q</original>
    <variation>A</variation>
    <location>
        <position position="465"/>
    </location>
</feature>
<feature type="mutagenesis site" description="Slightly decreased diacylglycerol O-acyltransferase activity." evidence="10">
    <original>V</original>
    <variation>A</variation>
    <location>
        <position position="469"/>
    </location>
</feature>
<feature type="sequence conflict" description="In Ref. 1; AAC63997." evidence="15" ref="1">
    <original>Y</original>
    <variation>H</variation>
    <location>
        <position position="129"/>
    </location>
</feature>
<feature type="strand" evidence="29">
    <location>
        <begin position="75"/>
        <end position="77"/>
    </location>
</feature>
<feature type="helix" evidence="27">
    <location>
        <begin position="78"/>
        <end position="80"/>
    </location>
</feature>
<feature type="helix" evidence="27">
    <location>
        <begin position="88"/>
        <end position="112"/>
    </location>
</feature>
<feature type="strand" evidence="28">
    <location>
        <begin position="113"/>
        <end position="115"/>
    </location>
</feature>
<feature type="helix" evidence="27">
    <location>
        <begin position="116"/>
        <end position="126"/>
    </location>
</feature>
<feature type="helix" evidence="26">
    <location>
        <begin position="128"/>
        <end position="130"/>
    </location>
</feature>
<feature type="helix" evidence="27">
    <location>
        <begin position="132"/>
        <end position="154"/>
    </location>
</feature>
<feature type="turn" evidence="27">
    <location>
        <begin position="155"/>
        <end position="157"/>
    </location>
</feature>
<feature type="helix" evidence="27">
    <location>
        <begin position="161"/>
        <end position="184"/>
    </location>
</feature>
<feature type="strand" evidence="29">
    <location>
        <begin position="187"/>
        <end position="189"/>
    </location>
</feature>
<feature type="helix" evidence="27">
    <location>
        <begin position="191"/>
        <end position="225"/>
    </location>
</feature>
<feature type="helix" evidence="28">
    <location>
        <begin position="244"/>
        <end position="246"/>
    </location>
</feature>
<feature type="helix" evidence="27">
    <location>
        <begin position="249"/>
        <end position="256"/>
    </location>
</feature>
<feature type="helix" evidence="27">
    <location>
        <begin position="275"/>
        <end position="299"/>
    </location>
</feature>
<feature type="helix" evidence="27">
    <location>
        <begin position="301"/>
        <end position="306"/>
    </location>
</feature>
<feature type="turn" evidence="27">
    <location>
        <begin position="311"/>
        <end position="313"/>
    </location>
</feature>
<feature type="helix" evidence="27">
    <location>
        <begin position="316"/>
        <end position="342"/>
    </location>
</feature>
<feature type="helix" evidence="27">
    <location>
        <begin position="344"/>
        <end position="352"/>
    </location>
</feature>
<feature type="helix" evidence="26">
    <location>
        <begin position="364"/>
        <end position="366"/>
    </location>
</feature>
<feature type="helix" evidence="27">
    <location>
        <begin position="370"/>
        <end position="374"/>
    </location>
</feature>
<feature type="helix" evidence="27">
    <location>
        <begin position="379"/>
        <end position="388"/>
    </location>
</feature>
<feature type="helix" evidence="27">
    <location>
        <begin position="391"/>
        <end position="395"/>
    </location>
</feature>
<feature type="helix" evidence="27">
    <location>
        <begin position="400"/>
        <end position="419"/>
    </location>
</feature>
<feature type="turn" evidence="27">
    <location>
        <begin position="420"/>
        <end position="423"/>
    </location>
</feature>
<feature type="helix" evidence="27">
    <location>
        <begin position="429"/>
        <end position="447"/>
    </location>
</feature>
<feature type="helix" evidence="27">
    <location>
        <begin position="450"/>
        <end position="462"/>
    </location>
</feature>
<feature type="turn" evidence="27">
    <location>
        <begin position="463"/>
        <end position="465"/>
    </location>
</feature>
<feature type="helix" evidence="27">
    <location>
        <begin position="466"/>
        <end position="478"/>
    </location>
</feature>
<reference key="1">
    <citation type="journal article" date="1998" name="J. Biol. Chem.">
        <title>Characterization of two human genes encoding acyl coenzyme A:cholesterol acyltransferase-related enzymes.</title>
        <authorList>
            <person name="Oelkers P."/>
            <person name="Behari A."/>
            <person name="Cromley D."/>
            <person name="Billheimer J.T."/>
            <person name="Sturley S.L."/>
        </authorList>
    </citation>
    <scope>NUCLEOTIDE SEQUENCE [MRNA]</scope>
    <scope>FUNCTION</scope>
</reference>
<reference key="2">
    <citation type="submission" date="2001-03" db="EMBL/GenBank/DDBJ databases">
        <authorList>
            <person name="Yamasaki Y."/>
            <person name="Watanabe T.K."/>
            <person name="Tanigami A."/>
        </authorList>
    </citation>
    <scope>NUCLEOTIDE SEQUENCE [MRNA]</scope>
</reference>
<reference key="3">
    <citation type="submission" date="2005-09" db="EMBL/GenBank/DDBJ databases">
        <authorList>
            <person name="Mural R.J."/>
            <person name="Istrail S."/>
            <person name="Sutton G.G."/>
            <person name="Florea L."/>
            <person name="Halpern A.L."/>
            <person name="Mobarry C.M."/>
            <person name="Lippert R."/>
            <person name="Walenz B."/>
            <person name="Shatkay H."/>
            <person name="Dew I."/>
            <person name="Miller J.R."/>
            <person name="Flanigan M.J."/>
            <person name="Edwards N.J."/>
            <person name="Bolanos R."/>
            <person name="Fasulo D."/>
            <person name="Halldorsson B.V."/>
            <person name="Hannenhalli S."/>
            <person name="Turner R."/>
            <person name="Yooseph S."/>
            <person name="Lu F."/>
            <person name="Nusskern D.R."/>
            <person name="Shue B.C."/>
            <person name="Zheng X.H."/>
            <person name="Zhong F."/>
            <person name="Delcher A.L."/>
            <person name="Huson D.H."/>
            <person name="Kravitz S.A."/>
            <person name="Mouchard L."/>
            <person name="Reinert K."/>
            <person name="Remington K.A."/>
            <person name="Clark A.G."/>
            <person name="Waterman M.S."/>
            <person name="Eichler E.E."/>
            <person name="Adams M.D."/>
            <person name="Hunkapiller M.W."/>
            <person name="Myers E.W."/>
            <person name="Venter J.C."/>
        </authorList>
    </citation>
    <scope>NUCLEOTIDE SEQUENCE [LARGE SCALE GENOMIC DNA]</scope>
</reference>
<reference key="4">
    <citation type="journal article" date="2004" name="Genome Res.">
        <title>The status, quality, and expansion of the NIH full-length cDNA project: the Mammalian Gene Collection (MGC).</title>
        <authorList>
            <consortium name="The MGC Project Team"/>
        </authorList>
    </citation>
    <scope>NUCLEOTIDE SEQUENCE [LARGE SCALE MRNA]</scope>
    <source>
        <tissue>Brain</tissue>
        <tissue>Skin</tissue>
    </source>
</reference>
<reference key="5">
    <citation type="journal article" date="2005" name="Biochim. Biophys. Acta">
        <title>Acyl coenzyme A dependent retinol esterification by acyl coenzyme A: diacylglycerol acyltransferase 1.</title>
        <authorList>
            <person name="Orland M.D."/>
            <person name="Anwar K."/>
            <person name="Cromley D."/>
            <person name="Chu C.H."/>
            <person name="Chen L."/>
            <person name="Billheimer J.T."/>
            <person name="Hussain M.M."/>
            <person name="Cheng D."/>
        </authorList>
    </citation>
    <scope>CATALYTIC ACTIVITY</scope>
    <scope>BIOPHYSICOCHEMICAL PROPERTIES</scope>
    <scope>ACTIVITY REGULATION</scope>
    <scope>FUNCTION</scope>
</reference>
<reference key="6">
    <citation type="journal article" date="2008" name="J. Biol. Chem.">
        <title>Acylation of acylglycerols by acyl coenzyme A:diacylglycerol acyltransferase 1 (DGAT1). Functional importance of DGAT1 in the intestinal fat absorption.</title>
        <authorList>
            <person name="Cheng D."/>
            <person name="Iqbal J."/>
            <person name="Devenny J."/>
            <person name="Chu C.H."/>
            <person name="Chen L."/>
            <person name="Dong J."/>
            <person name="Seethala R."/>
            <person name="Keim W.J."/>
            <person name="Azzara A.V."/>
            <person name="Lawrence R.M."/>
            <person name="Pelleymounter M.A."/>
            <person name="Hussain M.M."/>
        </authorList>
    </citation>
    <scope>FUNCTION</scope>
    <scope>CATALYTIC ACTIVITY</scope>
</reference>
<reference key="7">
    <citation type="journal article" date="2017" name="J. Lipid Res.">
        <title>Synthesis of neutral ether lipid monoalkyl-diacylglycerol by lipid acyltransferases.</title>
        <authorList>
            <person name="Ma Z."/>
            <person name="Onorato J.M."/>
            <person name="Chen L."/>
            <person name="Nelson D.W."/>
            <person name="Yen C.E."/>
            <person name="Cheng D."/>
        </authorList>
    </citation>
    <scope>CATALYTIC ACTIVITY</scope>
    <scope>FUNCTION</scope>
</reference>
<reference key="8">
    <citation type="journal article" date="2012" name="J. Clin. Invest.">
        <title>DGAT1 mutation is linked to a congenital diarrheal disorder.</title>
        <authorList>
            <person name="Haas J.T."/>
            <person name="Winter H.S."/>
            <person name="Lim E."/>
            <person name="Kirby A."/>
            <person name="Blumenstiel B."/>
            <person name="DeFelice M."/>
            <person name="Gabriel S."/>
            <person name="Jalas C."/>
            <person name="Branski D."/>
            <person name="Grueter C.A."/>
            <person name="Toporovski M.S."/>
            <person name="Walther T.C."/>
            <person name="Daly M.J."/>
            <person name="Farese R.V. Jr."/>
        </authorList>
    </citation>
    <scope>INVOLVEMENT IN DIAR7</scope>
</reference>
<reference key="9">
    <citation type="journal article" date="2014" name="J. Proteomics">
        <title>An enzyme assisted RP-RPLC approach for in-depth analysis of human liver phosphoproteome.</title>
        <authorList>
            <person name="Bian Y."/>
            <person name="Song C."/>
            <person name="Cheng K."/>
            <person name="Dong M."/>
            <person name="Wang F."/>
            <person name="Huang J."/>
            <person name="Sun D."/>
            <person name="Wang L."/>
            <person name="Ye M."/>
            <person name="Zou H."/>
        </authorList>
    </citation>
    <scope>PHOSPHORYLATION [LARGE SCALE ANALYSIS] AT SER-17 AND SER-18</scope>
    <scope>IDENTIFICATION BY MASS SPECTROMETRY [LARGE SCALE ANALYSIS]</scope>
    <source>
        <tissue>Liver</tissue>
    </source>
</reference>
<reference evidence="23 24" key="10">
    <citation type="journal article" date="2020" name="Nature">
        <title>Structure and catalytic mechanism of a human triacylglycerol-synthesis enzyme.</title>
        <authorList>
            <person name="Sui X."/>
            <person name="Wang K."/>
            <person name="Gluchowski N.L."/>
            <person name="Elliott S.D."/>
            <person name="Liao M."/>
            <person name="Walther T.C."/>
            <person name="Farese R.V. Jr."/>
        </authorList>
    </citation>
    <scope>STRUCTURE BY ELECTRON MICROSCOPY (3.1 ANGSTROMS)IN COMPLEX WITH (9Z)-OCTADECENOYL-COA</scope>
    <scope>FUNCTION</scope>
    <scope>CATALYTIC ACTIVITY</scope>
    <scope>SUBUNIT</scope>
    <scope>DOMAIN</scope>
    <scope>MUTAGENESIS OF GLN-375; ASN-378; VAL-381; HIS-382; CYS-385; ILE-386; TYR-390; LYS-391; ARG-404; VAL-407; SER-411; HIS-415; MET-434; GLN-437; GLN-465 AND VAL-469</scope>
</reference>
<reference evidence="22" key="11">
    <citation type="journal article" date="2020" name="Nature">
        <title>Structure and mechanism of human diacylglycerol O-acyltransferase 1.</title>
        <authorList>
            <person name="Wang L."/>
            <person name="Qian H."/>
            <person name="Nian Y."/>
            <person name="Han Y."/>
            <person name="Ren Z."/>
            <person name="Zhang H."/>
            <person name="Hu L."/>
            <person name="Prasad B.V.V."/>
            <person name="Laganowsky A."/>
            <person name="Yan N."/>
            <person name="Zhou M."/>
        </authorList>
    </citation>
    <scope>STRUCTURE BY ELECTRON MICROSCOPY (3.0 ANGSTROMS) IN COMPLEX WITH (9Z)-OCTADECENOYL-COA AND 1,2-DI-(9Z-OCTADECENOYL)-SN-GLYCEROL</scope>
    <scope>FUNCTION</scope>
    <scope>CATALYTIC ACTIVITY</scope>
    <scope>ACTIVE SITE</scope>
    <scope>SUBUNIT</scope>
    <scope>DOMAIN</scope>
    <scope>MUTAGENESIS OF LEU-346; THR-371; TRP-377; ASN-378; HIS-382; TYR-390; LYS-400; ARG-404; SER-411; HIS-415 AND GLU-416</scope>
</reference>
<reference key="12">
    <citation type="journal article" date="2019" name="Genet. Med.">
        <title>Autozygome and high throughput confirmation of disease genes candidacy.</title>
        <authorList>
            <person name="Maddirevula S."/>
            <person name="Alzahrani F."/>
            <person name="Al-Owain M."/>
            <person name="Al Muhaizea M.A."/>
            <person name="Kayyali H.R."/>
            <person name="AlHashem A."/>
            <person name="Rahbeeni Z."/>
            <person name="Al-Otaibi M."/>
            <person name="Alzaidan H.I."/>
            <person name="Balobaid A."/>
            <person name="El Khashab H.Y."/>
            <person name="Bubshait D.K."/>
            <person name="Faden M."/>
            <person name="Yamani S.A."/>
            <person name="Dabbagh O."/>
            <person name="Al-Mureikhi M."/>
            <person name="Jasser A.A."/>
            <person name="Alsaif H.S."/>
            <person name="Alluhaydan I."/>
            <person name="Seidahmed M.Z."/>
            <person name="Alabbasi B.H."/>
            <person name="Almogarri I."/>
            <person name="Kurdi W."/>
            <person name="Akleh H."/>
            <person name="Qari A."/>
            <person name="Al Tala S.M."/>
            <person name="Alhomaidi S."/>
            <person name="Kentab A.Y."/>
            <person name="Salih M.A."/>
            <person name="Chedrawi A."/>
            <person name="Alameer S."/>
            <person name="Tabarki B."/>
            <person name="Shamseldin H.E."/>
            <person name="Patel N."/>
            <person name="Ibrahim N."/>
            <person name="Abdulwahab F."/>
            <person name="Samira M."/>
            <person name="Goljan E."/>
            <person name="Abouelhoda M."/>
            <person name="Meyer B.F."/>
            <person name="Hashem M."/>
            <person name="Shaheen R."/>
            <person name="AlShahwan S."/>
            <person name="Alfadhel M."/>
            <person name="Ben-Omran T."/>
            <person name="Al-Qattan M.M."/>
            <person name="Monies D."/>
            <person name="Alkuraya F.S."/>
        </authorList>
    </citation>
    <scope>VARIANT DIAR7 458-TRP--ALA-488 DEL</scope>
</reference>
<gene>
    <name evidence="12 21" type="primary">DGAT1</name>
    <name evidence="14" type="synonym">AGRP1</name>
    <name type="synonym">DGAT</name>
</gene>
<accession>O75907</accession>
<accession>B2RWQ2</accession>
<accession>D3DWL6</accession>
<accession>Q96BB8</accession>